<gene>
    <name evidence="1" type="primary">mgrB</name>
    <name type="ordered locus">EcSMS35_1362</name>
</gene>
<dbReference type="EMBL" id="CP000970">
    <property type="protein sequence ID" value="ACB15726.1"/>
    <property type="molecule type" value="Genomic_DNA"/>
</dbReference>
<dbReference type="RefSeq" id="WP_000714550.1">
    <property type="nucleotide sequence ID" value="NC_010498.1"/>
</dbReference>
<dbReference type="SMR" id="B1LD47"/>
<dbReference type="GeneID" id="93776075"/>
<dbReference type="KEGG" id="ecm:EcSMS35_1362"/>
<dbReference type="HOGENOM" id="CLU_208030_1_0_6"/>
<dbReference type="Proteomes" id="UP000007011">
    <property type="component" value="Chromosome"/>
</dbReference>
<dbReference type="GO" id="GO:0005886">
    <property type="term" value="C:plasma membrane"/>
    <property type="evidence" value="ECO:0007669"/>
    <property type="project" value="UniProtKB-SubCell"/>
</dbReference>
<dbReference type="GO" id="GO:0070298">
    <property type="term" value="P:negative regulation of phosphorelay signal transduction system"/>
    <property type="evidence" value="ECO:0007669"/>
    <property type="project" value="UniProtKB-UniRule"/>
</dbReference>
<dbReference type="HAMAP" id="MF_01596">
    <property type="entry name" value="MgrB"/>
    <property type="match status" value="1"/>
</dbReference>
<dbReference type="InterPro" id="IPR020907">
    <property type="entry name" value="MgrB"/>
</dbReference>
<dbReference type="NCBIfam" id="NF007635">
    <property type="entry name" value="PRK10299.1"/>
    <property type="match status" value="1"/>
</dbReference>
<dbReference type="Pfam" id="PF13998">
    <property type="entry name" value="MgrB"/>
    <property type="match status" value="1"/>
</dbReference>
<dbReference type="PROSITE" id="PS51257">
    <property type="entry name" value="PROKAR_LIPOPROTEIN"/>
    <property type="match status" value="1"/>
</dbReference>
<feature type="chain" id="PRO_1000201565" description="PhoP/PhoQ regulator MgrB">
    <location>
        <begin position="1"/>
        <end position="47"/>
    </location>
</feature>
<feature type="transmembrane region" description="Helical" evidence="1">
    <location>
        <begin position="6"/>
        <end position="26"/>
    </location>
</feature>
<protein>
    <recommendedName>
        <fullName evidence="1">PhoP/PhoQ regulator MgrB</fullName>
    </recommendedName>
</protein>
<organism>
    <name type="scientific">Escherichia coli (strain SMS-3-5 / SECEC)</name>
    <dbReference type="NCBI Taxonomy" id="439855"/>
    <lineage>
        <taxon>Bacteria</taxon>
        <taxon>Pseudomonadati</taxon>
        <taxon>Pseudomonadota</taxon>
        <taxon>Gammaproteobacteria</taxon>
        <taxon>Enterobacterales</taxon>
        <taxon>Enterobacteriaceae</taxon>
        <taxon>Escherichia</taxon>
    </lineage>
</organism>
<comment type="function">
    <text evidence="1">PhoP-regulated transcription is redox-sensitive, being activated when the periplasm becomes more reducing. MgrB acts between DsbA/DsbB and PhoP/PhoQ in this pathway. Represses PhoP/PhoQ signaling, possibly by binding to the periplasmic domain of PhoQ, altering its activity and that of downstream effector PhoP.</text>
</comment>
<comment type="subunit">
    <text evidence="1">May form homooligomers. Probably interacts with the periplasmic domain of PhoQ.</text>
</comment>
<comment type="subcellular location">
    <subcellularLocation>
        <location evidence="1">Cell inner membrane</location>
        <topology evidence="1">Single-pass membrane protein</topology>
    </subcellularLocation>
</comment>
<comment type="similarity">
    <text evidence="1">Belongs to the MgrB family.</text>
</comment>
<accession>B1LD47</accession>
<proteinExistence type="inferred from homology"/>
<evidence type="ECO:0000255" key="1">
    <source>
        <dbReference type="HAMAP-Rule" id="MF_01596"/>
    </source>
</evidence>
<name>MGRB_ECOSM</name>
<reference key="1">
    <citation type="journal article" date="2008" name="J. Bacteriol.">
        <title>Insights into the environmental resistance gene pool from the genome sequence of the multidrug-resistant environmental isolate Escherichia coli SMS-3-5.</title>
        <authorList>
            <person name="Fricke W.F."/>
            <person name="Wright M.S."/>
            <person name="Lindell A.H."/>
            <person name="Harkins D.M."/>
            <person name="Baker-Austin C."/>
            <person name="Ravel J."/>
            <person name="Stepanauskas R."/>
        </authorList>
    </citation>
    <scope>NUCLEOTIDE SEQUENCE [LARGE SCALE GENOMIC DNA]</scope>
    <source>
        <strain>SMS-3-5 / SECEC</strain>
    </source>
</reference>
<keyword id="KW-0997">Cell inner membrane</keyword>
<keyword id="KW-1003">Cell membrane</keyword>
<keyword id="KW-0472">Membrane</keyword>
<keyword id="KW-0812">Transmembrane</keyword>
<keyword id="KW-1133">Transmembrane helix</keyword>
<sequence>MKKFRWVVLVVVVLACLLLWAQVFNMMCDQDVQFFSGICAINQFIPW</sequence>